<sequence length="463" mass="52528">MEKALSKTWSDRFDKGLNPFIEKFNASIEFDICLLEEDLDGSIAHARMLGIQGIITKEEALRLENGLQQIRKEASDGLFQPVIADEDVHFAVEKKLIDLIGPVGKKLHTGRSRNDQVGTDLRLWLRKRIDEIDMDLVRLQKSLFLLAEENLYTLIPGYTHLQRAQPLSLAHHLLAYIEMAQRDRNRLKDVRKRVNISPLGAAALAGTSISISRKITSSELHFQGIYSNSLDAVSDRDFVVEFLGASSLIMAHLSRLSEEVILWASEEFAFIQLTDRCATGSSLMPQKKNPDVPELVRGKSGRVFGHLQAMLTMIKGLPLAYNKDFQEDKEAIFDSVKTVKNSLIAISILFEEGLIFRKERLNQAVSSDFSNATDVADYLVAKDIPFREAYQLVGRIVKTSLEEGILLKDFPLERWKTFHKFFEKDIYEKLLPSSVVESRLSAGGTGFERVQEQLLSWREKLFN</sequence>
<protein>
    <recommendedName>
        <fullName evidence="1">Argininosuccinate lyase</fullName>
        <shortName evidence="1">ASAL</shortName>
        <ecNumber evidence="1">4.3.2.1</ecNumber>
    </recommendedName>
    <alternativeName>
        <fullName evidence="1">Arginosuccinase</fullName>
    </alternativeName>
</protein>
<organism>
    <name type="scientific">Prochlorococcus marinus (strain NATL1A)</name>
    <dbReference type="NCBI Taxonomy" id="167555"/>
    <lineage>
        <taxon>Bacteria</taxon>
        <taxon>Bacillati</taxon>
        <taxon>Cyanobacteriota</taxon>
        <taxon>Cyanophyceae</taxon>
        <taxon>Synechococcales</taxon>
        <taxon>Prochlorococcaceae</taxon>
        <taxon>Prochlorococcus</taxon>
    </lineage>
</organism>
<evidence type="ECO:0000255" key="1">
    <source>
        <dbReference type="HAMAP-Rule" id="MF_00006"/>
    </source>
</evidence>
<comment type="catalytic activity">
    <reaction evidence="1">
        <text>2-(N(omega)-L-arginino)succinate = fumarate + L-arginine</text>
        <dbReference type="Rhea" id="RHEA:24020"/>
        <dbReference type="ChEBI" id="CHEBI:29806"/>
        <dbReference type="ChEBI" id="CHEBI:32682"/>
        <dbReference type="ChEBI" id="CHEBI:57472"/>
        <dbReference type="EC" id="4.3.2.1"/>
    </reaction>
</comment>
<comment type="pathway">
    <text evidence="1">Amino-acid biosynthesis; L-arginine biosynthesis; L-arginine from L-ornithine and carbamoyl phosphate: step 3/3.</text>
</comment>
<comment type="subcellular location">
    <subcellularLocation>
        <location evidence="1">Cytoplasm</location>
    </subcellularLocation>
</comment>
<comment type="similarity">
    <text evidence="1">Belongs to the lyase 1 family. Argininosuccinate lyase subfamily.</text>
</comment>
<accession>A2BZB5</accession>
<reference key="1">
    <citation type="journal article" date="2007" name="PLoS Genet.">
        <title>Patterns and implications of gene gain and loss in the evolution of Prochlorococcus.</title>
        <authorList>
            <person name="Kettler G.C."/>
            <person name="Martiny A.C."/>
            <person name="Huang K."/>
            <person name="Zucker J."/>
            <person name="Coleman M.L."/>
            <person name="Rodrigue S."/>
            <person name="Chen F."/>
            <person name="Lapidus A."/>
            <person name="Ferriera S."/>
            <person name="Johnson J."/>
            <person name="Steglich C."/>
            <person name="Church G.M."/>
            <person name="Richardson P."/>
            <person name="Chisholm S.W."/>
        </authorList>
    </citation>
    <scope>NUCLEOTIDE SEQUENCE [LARGE SCALE GENOMIC DNA]</scope>
    <source>
        <strain>NATL1A</strain>
    </source>
</reference>
<keyword id="KW-0028">Amino-acid biosynthesis</keyword>
<keyword id="KW-0055">Arginine biosynthesis</keyword>
<keyword id="KW-0963">Cytoplasm</keyword>
<keyword id="KW-0456">Lyase</keyword>
<feature type="chain" id="PRO_1000000519" description="Argininosuccinate lyase">
    <location>
        <begin position="1"/>
        <end position="463"/>
    </location>
</feature>
<name>ARLY_PROM1</name>
<gene>
    <name evidence="1" type="primary">argH</name>
    <name type="ordered locus">NATL1_00111</name>
</gene>
<dbReference type="EC" id="4.3.2.1" evidence="1"/>
<dbReference type="EMBL" id="CP000553">
    <property type="protein sequence ID" value="ABM74575.1"/>
    <property type="molecule type" value="Genomic_DNA"/>
</dbReference>
<dbReference type="RefSeq" id="WP_011822813.1">
    <property type="nucleotide sequence ID" value="NC_008819.1"/>
</dbReference>
<dbReference type="SMR" id="A2BZB5"/>
<dbReference type="KEGG" id="pme:NATL1_00111"/>
<dbReference type="eggNOG" id="COG0165">
    <property type="taxonomic scope" value="Bacteria"/>
</dbReference>
<dbReference type="HOGENOM" id="CLU_027272_2_3_3"/>
<dbReference type="UniPathway" id="UPA00068">
    <property type="reaction ID" value="UER00114"/>
</dbReference>
<dbReference type="Proteomes" id="UP000002592">
    <property type="component" value="Chromosome"/>
</dbReference>
<dbReference type="GO" id="GO:0005829">
    <property type="term" value="C:cytosol"/>
    <property type="evidence" value="ECO:0007669"/>
    <property type="project" value="TreeGrafter"/>
</dbReference>
<dbReference type="GO" id="GO:0004056">
    <property type="term" value="F:argininosuccinate lyase activity"/>
    <property type="evidence" value="ECO:0007669"/>
    <property type="project" value="UniProtKB-UniRule"/>
</dbReference>
<dbReference type="GO" id="GO:0042450">
    <property type="term" value="P:arginine biosynthetic process via ornithine"/>
    <property type="evidence" value="ECO:0007669"/>
    <property type="project" value="InterPro"/>
</dbReference>
<dbReference type="GO" id="GO:0006526">
    <property type="term" value="P:L-arginine biosynthetic process"/>
    <property type="evidence" value="ECO:0007669"/>
    <property type="project" value="UniProtKB-UniRule"/>
</dbReference>
<dbReference type="CDD" id="cd01359">
    <property type="entry name" value="Argininosuccinate_lyase"/>
    <property type="match status" value="1"/>
</dbReference>
<dbReference type="FunFam" id="1.10.275.10:FF:000002">
    <property type="entry name" value="Argininosuccinate lyase"/>
    <property type="match status" value="1"/>
</dbReference>
<dbReference type="FunFam" id="1.10.40.30:FF:000001">
    <property type="entry name" value="Argininosuccinate lyase"/>
    <property type="match status" value="1"/>
</dbReference>
<dbReference type="FunFam" id="1.20.200.10:FF:000015">
    <property type="entry name" value="argininosuccinate lyase isoform X2"/>
    <property type="match status" value="1"/>
</dbReference>
<dbReference type="Gene3D" id="1.10.40.30">
    <property type="entry name" value="Fumarase/aspartase (C-terminal domain)"/>
    <property type="match status" value="1"/>
</dbReference>
<dbReference type="Gene3D" id="1.20.200.10">
    <property type="entry name" value="Fumarase/aspartase (Central domain)"/>
    <property type="match status" value="1"/>
</dbReference>
<dbReference type="Gene3D" id="1.10.275.10">
    <property type="entry name" value="Fumarase/aspartase (N-terminal domain)"/>
    <property type="match status" value="1"/>
</dbReference>
<dbReference type="HAMAP" id="MF_00006">
    <property type="entry name" value="Arg_succ_lyase"/>
    <property type="match status" value="1"/>
</dbReference>
<dbReference type="InterPro" id="IPR029419">
    <property type="entry name" value="Arg_succ_lyase_C"/>
</dbReference>
<dbReference type="InterPro" id="IPR009049">
    <property type="entry name" value="Argininosuccinate_lyase"/>
</dbReference>
<dbReference type="InterPro" id="IPR024083">
    <property type="entry name" value="Fumarase/histidase_N"/>
</dbReference>
<dbReference type="InterPro" id="IPR020557">
    <property type="entry name" value="Fumarate_lyase_CS"/>
</dbReference>
<dbReference type="InterPro" id="IPR000362">
    <property type="entry name" value="Fumarate_lyase_fam"/>
</dbReference>
<dbReference type="InterPro" id="IPR022761">
    <property type="entry name" value="Fumarate_lyase_N"/>
</dbReference>
<dbReference type="InterPro" id="IPR008948">
    <property type="entry name" value="L-Aspartase-like"/>
</dbReference>
<dbReference type="NCBIfam" id="TIGR00838">
    <property type="entry name" value="argH"/>
    <property type="match status" value="1"/>
</dbReference>
<dbReference type="PANTHER" id="PTHR43814">
    <property type="entry name" value="ARGININOSUCCINATE LYASE"/>
    <property type="match status" value="1"/>
</dbReference>
<dbReference type="PANTHER" id="PTHR43814:SF1">
    <property type="entry name" value="ARGININOSUCCINATE LYASE"/>
    <property type="match status" value="1"/>
</dbReference>
<dbReference type="Pfam" id="PF14698">
    <property type="entry name" value="ASL_C2"/>
    <property type="match status" value="1"/>
</dbReference>
<dbReference type="Pfam" id="PF00206">
    <property type="entry name" value="Lyase_1"/>
    <property type="match status" value="1"/>
</dbReference>
<dbReference type="PRINTS" id="PR00145">
    <property type="entry name" value="ARGSUCLYASE"/>
</dbReference>
<dbReference type="PRINTS" id="PR00149">
    <property type="entry name" value="FUMRATELYASE"/>
</dbReference>
<dbReference type="SUPFAM" id="SSF48557">
    <property type="entry name" value="L-aspartase-like"/>
    <property type="match status" value="1"/>
</dbReference>
<dbReference type="PROSITE" id="PS00163">
    <property type="entry name" value="FUMARATE_LYASES"/>
    <property type="match status" value="1"/>
</dbReference>
<proteinExistence type="inferred from homology"/>